<dbReference type="EMBL" id="KU295460">
    <property type="protein sequence ID" value="AME17870.1"/>
    <property type="molecule type" value="mRNA"/>
</dbReference>
<dbReference type="SMR" id="A0A125S9M4"/>
<dbReference type="GO" id="GO:0005882">
    <property type="term" value="C:intermediate filament"/>
    <property type="evidence" value="ECO:0007669"/>
    <property type="project" value="UniProtKB-KW"/>
</dbReference>
<dbReference type="GO" id="GO:0005634">
    <property type="term" value="C:nucleus"/>
    <property type="evidence" value="ECO:0007669"/>
    <property type="project" value="UniProtKB-SubCell"/>
</dbReference>
<dbReference type="Gene3D" id="1.20.58.70">
    <property type="match status" value="1"/>
</dbReference>
<dbReference type="Gene3D" id="2.60.40.1260">
    <property type="entry name" value="Lamin Tail domain"/>
    <property type="match status" value="1"/>
</dbReference>
<dbReference type="InterPro" id="IPR039008">
    <property type="entry name" value="IF_rod_dom"/>
</dbReference>
<dbReference type="InterPro" id="IPR001322">
    <property type="entry name" value="Lamin_tail_dom"/>
</dbReference>
<dbReference type="InterPro" id="IPR036415">
    <property type="entry name" value="Lamin_tail_dom_sf"/>
</dbReference>
<dbReference type="PANTHER" id="PTHR45721">
    <property type="entry name" value="LAMIN DM0-RELATED"/>
    <property type="match status" value="1"/>
</dbReference>
<dbReference type="PANTHER" id="PTHR45721:SF11">
    <property type="entry name" value="LAMIN DM0-RELATED"/>
    <property type="match status" value="1"/>
</dbReference>
<dbReference type="Pfam" id="PF00038">
    <property type="entry name" value="Filament"/>
    <property type="match status" value="1"/>
</dbReference>
<dbReference type="SMART" id="SM01391">
    <property type="entry name" value="Filament"/>
    <property type="match status" value="1"/>
</dbReference>
<dbReference type="SUPFAM" id="SSF74853">
    <property type="entry name" value="Lamin A/C globular tail domain"/>
    <property type="match status" value="1"/>
</dbReference>
<dbReference type="PROSITE" id="PS51842">
    <property type="entry name" value="IF_ROD_2"/>
    <property type="match status" value="1"/>
</dbReference>
<dbReference type="PROSITE" id="PS51841">
    <property type="entry name" value="LTD"/>
    <property type="match status" value="1"/>
</dbReference>
<organism evidence="5">
    <name type="scientific">Hypsibius exemplaris</name>
    <name type="common">Freshwater tardigrade</name>
    <dbReference type="NCBI Taxonomy" id="2072580"/>
    <lineage>
        <taxon>Eukaryota</taxon>
        <taxon>Metazoa</taxon>
        <taxon>Ecdysozoa</taxon>
        <taxon>Tardigrada</taxon>
        <taxon>Eutardigrada</taxon>
        <taxon>Parachela</taxon>
        <taxon>Hypsibioidea</taxon>
        <taxon>Hypsibiidae</taxon>
        <taxon>Hypsibius</taxon>
    </lineage>
</organism>
<reference key="1">
    <citation type="journal article" date="2016" name="Elife">
        <title>Novel origin of lamin-derived cytoplasmic intermediate filaments in tardigrades.</title>
        <authorList>
            <person name="Hering L."/>
            <person name="Bouameur J.E."/>
            <person name="Reichelt J."/>
            <person name="Magin T.M."/>
            <person name="Mayer G."/>
        </authorList>
    </citation>
    <scope>NUCLEOTIDE SEQUENCE [MRNA]</scope>
    <scope>IDENTIFICATION</scope>
    <scope>SUBCELLULAR LOCATION</scope>
    <scope>DOMAIN</scope>
</reference>
<name>LMN1_HYPEX</name>
<sequence>MAEKAGEAGVQTRSRRNRSTSREVSNGVAAPPAKATRSSQLEAVAEQATPSSQQSQKSVRTESSMSLGFNGGSSQGSRATSPTSFSRAQEKEELQNLNDRLAKILNKLNDSEEENRTLKIRLTTVQQETSADLNDQIGKYRDELERARKAVDAITQEKDRELLAKDKALGELNEHKAQFAALRKRLDELEARLKAAEKAARDKDNVLTELKAQLAESETAGKRIQKELADKTKQLDQARNQIEQEVISRTNLENALKTAEEKAKFENNLLESKLQRQSLSVTTVDHHSAQSTSRRSGSDFSASVEDMRSALEDAREEIQENMDRMYGSKLEGLEVLSESQKQTINGLNQALTASRHDMKDLQKENQQLRKKVGEVEKELHQQHQKFDQHKMDCTARIAALSDQSNQASQQYQALLEEYRTTTHNNVEMRTELEMYNKLLSDEEIRLGITSADQYGGVRHGAKKRKLTETFYTTPFGSRSSAGSRSAGHNSTPVTKSQVTRTTVKTSENKSKASGPVRILEVAPGKVVRLENISEAVMQLGHWRIHQHGASGDAAFQFEKDQVIGGQSIISVYSSTEDSQPNNGVTEIIATNAWLADSHLETVLSDGDGNQMATYEVSADSNLDIHNDSVRDSPRSAGKGILGFFGL</sequence>
<comment type="function">
    <text evidence="6">Intermediate filament (IF) protein, component of the nuclear lamina, a fibrous layer on the nucleoplasmic side of the inner nuclear membrane, which is thought to provide a framework for the nuclear envelope (PubMed:26840051).</text>
</comment>
<comment type="subcellular location">
    <subcellularLocation>
        <location evidence="4">Nucleus</location>
    </subcellularLocation>
    <text evidence="4">Localizes throughout the nucleoplasm (PubMed:26840051).</text>
</comment>
<comment type="domain">
    <text evidence="6">Contains an alpha-helical IF rod domain organization with three coiled coil-forming segments (coil 1A, coil 1B, and coil 2) (PubMed:26840051).</text>
</comment>
<comment type="similarity">
    <text evidence="2">Belongs to the intermediate filament family.</text>
</comment>
<feature type="chain" id="PRO_0000440214" description="Lamin-1">
    <location>
        <begin position="1"/>
        <end position="646"/>
    </location>
</feature>
<feature type="domain" description="IF rod" evidence="2 6">
    <location>
        <begin position="90"/>
        <end position="446"/>
    </location>
</feature>
<feature type="domain" description="LTD" evidence="1">
    <location>
        <begin position="504"/>
        <end position="618"/>
    </location>
</feature>
<feature type="region of interest" description="Disordered" evidence="3">
    <location>
        <begin position="1"/>
        <end position="94"/>
    </location>
</feature>
<feature type="region of interest" description="Head" evidence="6">
    <location>
        <begin position="1"/>
        <end position="85"/>
    </location>
</feature>
<feature type="region of interest" description="Coil 1A" evidence="6">
    <location>
        <begin position="86"/>
        <end position="126"/>
    </location>
</feature>
<feature type="region of interest" description="Linker 1" evidence="6">
    <location>
        <begin position="127"/>
        <end position="137"/>
    </location>
</feature>
<feature type="region of interest" description="Coil 1B" evidence="6">
    <location>
        <begin position="138"/>
        <end position="281"/>
    </location>
</feature>
<feature type="region of interest" description="Disordered" evidence="3">
    <location>
        <begin position="281"/>
        <end position="304"/>
    </location>
</feature>
<feature type="region of interest" description="Linker 2" evidence="6">
    <location>
        <begin position="282"/>
        <end position="299"/>
    </location>
</feature>
<feature type="region of interest" description="Coil 2" evidence="6">
    <location>
        <begin position="300"/>
        <end position="439"/>
    </location>
</feature>
<feature type="region of interest" description="Tail" evidence="6">
    <location>
        <begin position="440"/>
        <end position="646"/>
    </location>
</feature>
<feature type="region of interest" description="Disordered" evidence="3">
    <location>
        <begin position="476"/>
        <end position="513"/>
    </location>
</feature>
<feature type="short sequence motif" description="Nuclear localization signal" evidence="6">
    <location>
        <begin position="457"/>
        <end position="471"/>
    </location>
</feature>
<feature type="compositionally biased region" description="Polar residues" evidence="3">
    <location>
        <begin position="48"/>
        <end position="67"/>
    </location>
</feature>
<feature type="compositionally biased region" description="Polar residues" evidence="3">
    <location>
        <begin position="75"/>
        <end position="87"/>
    </location>
</feature>
<feature type="compositionally biased region" description="Polar residues" evidence="3">
    <location>
        <begin position="281"/>
        <end position="301"/>
    </location>
</feature>
<feature type="compositionally biased region" description="Low complexity" evidence="3">
    <location>
        <begin position="476"/>
        <end position="487"/>
    </location>
</feature>
<feature type="compositionally biased region" description="Polar residues" evidence="3">
    <location>
        <begin position="488"/>
        <end position="505"/>
    </location>
</feature>
<accession>A0A125S9M4</accession>
<evidence type="ECO:0000255" key="1">
    <source>
        <dbReference type="PROSITE-ProRule" id="PRU01187"/>
    </source>
</evidence>
<evidence type="ECO:0000255" key="2">
    <source>
        <dbReference type="PROSITE-ProRule" id="PRU01188"/>
    </source>
</evidence>
<evidence type="ECO:0000256" key="3">
    <source>
        <dbReference type="SAM" id="MobiDB-lite"/>
    </source>
</evidence>
<evidence type="ECO:0000269" key="4">
    <source>
    </source>
</evidence>
<evidence type="ECO:0000303" key="5">
    <source>
    </source>
</evidence>
<evidence type="ECO:0000305" key="6">
    <source>
    </source>
</evidence>
<keyword id="KW-0175">Coiled coil</keyword>
<keyword id="KW-0403">Intermediate filament</keyword>
<keyword id="KW-0539">Nucleus</keyword>
<proteinExistence type="evidence at transcript level"/>
<protein>
    <recommendedName>
        <fullName evidence="5">Lamin-1</fullName>
    </recommendedName>
</protein>